<protein>
    <recommendedName>
        <fullName>Tubulin beta-6 chain</fullName>
    </recommendedName>
    <alternativeName>
        <fullName>Beta-6-tubulin</fullName>
    </alternativeName>
</protein>
<sequence>MREILHIQGGQCGNQIGSKFWEVVCDEHGIDPTGRYAGTSDLQLERVNVYYNEASCGRFVPRAVLMDLEPGTMDSVRTGPYGQIFRPDNFVFGQSGAGNNWAKGHYTEGAELIDSVLDVVRKEAENCDCLQGFQVCHSLGGGTGSGMGTLLISKIREEYPDRMMLTFSVFPSPKVSDTVVEPYNATLSVHQLVENADECMVLDNEALYDICFRTLKLTTPSFGDLNHLISATMSGVTCCLRFPGQLNSDLRKLAVNLIPFPRLHFFMVGFAPLTSRGSQQYRALTVPELTQQMWDAKNMMCAADPRHGRYLTASAMFRGKMSTKEVDEQMINVQNKNSSYFVEWIPNNVKSSVCDIPPRGLSMASTFVGNSTSIQEMFRRVSEQFTAMFRRKAFLHWYTGEGMDEMEFTEAESNMNDLVSEYQQYQDATADEAEYEEEEDAIQE</sequence>
<name>TBB6_ORYSJ</name>
<feature type="chain" id="PRO_0000048368" description="Tubulin beta-6 chain">
    <location>
        <begin position="1"/>
        <end position="444"/>
    </location>
</feature>
<feature type="binding site" evidence="3">
    <location>
        <position position="11"/>
    </location>
    <ligand>
        <name>GTP</name>
        <dbReference type="ChEBI" id="CHEBI:37565"/>
    </ligand>
</feature>
<feature type="binding site" evidence="2">
    <location>
        <position position="69"/>
    </location>
    <ligand>
        <name>GTP</name>
        <dbReference type="ChEBI" id="CHEBI:37565"/>
    </ligand>
</feature>
<feature type="binding site" evidence="2">
    <location>
        <position position="69"/>
    </location>
    <ligand>
        <name>Mg(2+)</name>
        <dbReference type="ChEBI" id="CHEBI:18420"/>
    </ligand>
</feature>
<feature type="binding site" evidence="3">
    <location>
        <position position="138"/>
    </location>
    <ligand>
        <name>GTP</name>
        <dbReference type="ChEBI" id="CHEBI:37565"/>
    </ligand>
</feature>
<feature type="binding site" evidence="3">
    <location>
        <position position="142"/>
    </location>
    <ligand>
        <name>GTP</name>
        <dbReference type="ChEBI" id="CHEBI:37565"/>
    </ligand>
</feature>
<feature type="binding site" evidence="3">
    <location>
        <position position="143"/>
    </location>
    <ligand>
        <name>GTP</name>
        <dbReference type="ChEBI" id="CHEBI:37565"/>
    </ligand>
</feature>
<feature type="binding site" evidence="3">
    <location>
        <position position="144"/>
    </location>
    <ligand>
        <name>GTP</name>
        <dbReference type="ChEBI" id="CHEBI:37565"/>
    </ligand>
</feature>
<feature type="binding site" evidence="3">
    <location>
        <position position="204"/>
    </location>
    <ligand>
        <name>GTP</name>
        <dbReference type="ChEBI" id="CHEBI:37565"/>
    </ligand>
</feature>
<feature type="binding site" evidence="3">
    <location>
        <position position="226"/>
    </location>
    <ligand>
        <name>GTP</name>
        <dbReference type="ChEBI" id="CHEBI:37565"/>
    </ligand>
</feature>
<accession>Q76FS3</accession>
<accession>Q0DI63</accession>
<evidence type="ECO:0000250" key="1">
    <source>
        <dbReference type="UniProtKB" id="P02557"/>
    </source>
</evidence>
<evidence type="ECO:0000250" key="2">
    <source>
        <dbReference type="UniProtKB" id="P68363"/>
    </source>
</evidence>
<evidence type="ECO:0000250" key="3">
    <source>
        <dbReference type="UniProtKB" id="Q13509"/>
    </source>
</evidence>
<evidence type="ECO:0000269" key="4">
    <source>
    </source>
</evidence>
<evidence type="ECO:0000305" key="5"/>
<comment type="function">
    <text evidence="1">Tubulin is the major constituent of microtubules, a cylinder consisting of laterally associated linear protofilaments composed of alpha- and beta-tubulin heterodimers. Microtubules grow by the addition of GTP-tubulin dimers to the microtubule end, where a stabilizing cap forms. Below the cap, tubulin dimers are in GDP-bound state, owing to GTPase activity of alpha-tubulin.</text>
</comment>
<comment type="cofactor">
    <cofactor evidence="2">
        <name>Mg(2+)</name>
        <dbReference type="ChEBI" id="CHEBI:18420"/>
    </cofactor>
</comment>
<comment type="subunit">
    <text>Dimer of alpha and beta chains. A typical microtubule is a hollow water-filled tube with an outer diameter of 25 nm and an inner diameter of 15 nM. Alpha-beta heterodimers associate head-to-tail to form protofilaments running lengthwise along the microtubule wall with the beta-tubulin subunit facing the microtubule plus end conferring a structural polarity. Microtubules usually have 13 protofilaments but different protofilament numbers can be found in some organisms and specialized cells.</text>
</comment>
<comment type="subcellular location">
    <subcellularLocation>
        <location>Cytoplasm</location>
        <location>Cytoskeleton</location>
    </subcellularLocation>
</comment>
<comment type="tissue specificity">
    <text evidence="4">Expressed in roots, leaf sheaths, anthers, and suspension cultured cells.</text>
</comment>
<comment type="induction">
    <text evidence="4">By gibberellin and brassinolide. Down-regulated by abscisic acid (ABA).</text>
</comment>
<comment type="similarity">
    <text evidence="5">Belongs to the tubulin family.</text>
</comment>
<reference key="1">
    <citation type="journal article" date="2003" name="Plant Cell Physiol.">
        <title>Expression analyses of beta-tubulin isotype genes in rice.</title>
        <authorList>
            <person name="Yoshikawa M."/>
            <person name="Yang G."/>
            <person name="Kawaguchi K."/>
            <person name="Komatsu S."/>
        </authorList>
    </citation>
    <scope>NUCLEOTIDE SEQUENCE [MRNA]</scope>
    <scope>TISSUE SPECIFICITY</scope>
    <scope>INDUCTION</scope>
    <scope>NOMENCLATURE</scope>
    <source>
        <strain>cv. Nipponbare</strain>
    </source>
</reference>
<reference key="2">
    <citation type="journal article" date="2005" name="Mol. Genet. Genomics">
        <title>A fine physical map of the rice chromosome 5.</title>
        <authorList>
            <person name="Cheng C.-H."/>
            <person name="Chung M.C."/>
            <person name="Liu S.-M."/>
            <person name="Chen S.-K."/>
            <person name="Kao F.Y."/>
            <person name="Lin S.-J."/>
            <person name="Hsiao S.-H."/>
            <person name="Tseng I.C."/>
            <person name="Hsing Y.-I.C."/>
            <person name="Wu H.-P."/>
            <person name="Chen C.-S."/>
            <person name="Shaw J.-F."/>
            <person name="Wu J."/>
            <person name="Matsumoto T."/>
            <person name="Sasaki T."/>
            <person name="Chen H.-C."/>
            <person name="Chow T.-Y."/>
        </authorList>
    </citation>
    <scope>NUCLEOTIDE SEQUENCE [LARGE SCALE GENOMIC DNA]</scope>
    <source>
        <strain>cv. Nipponbare</strain>
    </source>
</reference>
<reference key="3">
    <citation type="journal article" date="2005" name="Nature">
        <title>The map-based sequence of the rice genome.</title>
        <authorList>
            <consortium name="International rice genome sequencing project (IRGSP)"/>
        </authorList>
    </citation>
    <scope>NUCLEOTIDE SEQUENCE [LARGE SCALE GENOMIC DNA]</scope>
    <source>
        <strain>cv. Nipponbare</strain>
    </source>
</reference>
<reference key="4">
    <citation type="journal article" date="2008" name="Nucleic Acids Res.">
        <title>The rice annotation project database (RAP-DB): 2008 update.</title>
        <authorList>
            <consortium name="The rice annotation project (RAP)"/>
        </authorList>
    </citation>
    <scope>GENOME REANNOTATION</scope>
    <source>
        <strain>cv. Nipponbare</strain>
    </source>
</reference>
<reference key="5">
    <citation type="journal article" date="2013" name="Rice">
        <title>Improvement of the Oryza sativa Nipponbare reference genome using next generation sequence and optical map data.</title>
        <authorList>
            <person name="Kawahara Y."/>
            <person name="de la Bastide M."/>
            <person name="Hamilton J.P."/>
            <person name="Kanamori H."/>
            <person name="McCombie W.R."/>
            <person name="Ouyang S."/>
            <person name="Schwartz D.C."/>
            <person name="Tanaka T."/>
            <person name="Wu J."/>
            <person name="Zhou S."/>
            <person name="Childs K.L."/>
            <person name="Davidson R.M."/>
            <person name="Lin H."/>
            <person name="Quesada-Ocampo L."/>
            <person name="Vaillancourt B."/>
            <person name="Sakai H."/>
            <person name="Lee S.S."/>
            <person name="Kim J."/>
            <person name="Numa H."/>
            <person name="Itoh T."/>
            <person name="Buell C.R."/>
            <person name="Matsumoto T."/>
        </authorList>
    </citation>
    <scope>GENOME REANNOTATION</scope>
    <source>
        <strain>cv. Nipponbare</strain>
    </source>
</reference>
<keyword id="KW-0963">Cytoplasm</keyword>
<keyword id="KW-0206">Cytoskeleton</keyword>
<keyword id="KW-0342">GTP-binding</keyword>
<keyword id="KW-0460">Magnesium</keyword>
<keyword id="KW-0479">Metal-binding</keyword>
<keyword id="KW-0493">Microtubule</keyword>
<keyword id="KW-0547">Nucleotide-binding</keyword>
<keyword id="KW-1185">Reference proteome</keyword>
<proteinExistence type="evidence at transcript level"/>
<dbReference type="EMBL" id="AB104732">
    <property type="protein sequence ID" value="BAC82429.1"/>
    <property type="molecule type" value="mRNA"/>
</dbReference>
<dbReference type="EMBL" id="AC130607">
    <property type="protein sequence ID" value="AAT94032.1"/>
    <property type="molecule type" value="Genomic_DNA"/>
</dbReference>
<dbReference type="EMBL" id="AP008211">
    <property type="protein sequence ID" value="BAF17460.1"/>
    <property type="molecule type" value="Genomic_DNA"/>
</dbReference>
<dbReference type="EMBL" id="AP014961">
    <property type="protein sequence ID" value="BAS94015.1"/>
    <property type="molecule type" value="Genomic_DNA"/>
</dbReference>
<dbReference type="RefSeq" id="XP_015640177.1">
    <property type="nucleotide sequence ID" value="XM_015784691.1"/>
</dbReference>
<dbReference type="SMR" id="Q76FS3"/>
<dbReference type="FunCoup" id="Q76FS3">
    <property type="interactions" value="1679"/>
</dbReference>
<dbReference type="STRING" id="39947.Q76FS3"/>
<dbReference type="PaxDb" id="39947-Q76FS3"/>
<dbReference type="EnsemblPlants" id="Os05t0413200-01">
    <property type="protein sequence ID" value="Os05t0413200-01"/>
    <property type="gene ID" value="Os05g0413200"/>
</dbReference>
<dbReference type="Gramene" id="Os05t0413200-01">
    <property type="protein sequence ID" value="Os05t0413200-01"/>
    <property type="gene ID" value="Os05g0413200"/>
</dbReference>
<dbReference type="KEGG" id="dosa:Os05g0413200"/>
<dbReference type="eggNOG" id="KOG1375">
    <property type="taxonomic scope" value="Eukaryota"/>
</dbReference>
<dbReference type="HOGENOM" id="CLU_015718_1_1_1"/>
<dbReference type="InParanoid" id="Q76FS3"/>
<dbReference type="OMA" id="KNARDSP"/>
<dbReference type="OrthoDB" id="10249382at2759"/>
<dbReference type="Proteomes" id="UP000000763">
    <property type="component" value="Chromosome 5"/>
</dbReference>
<dbReference type="Proteomes" id="UP000059680">
    <property type="component" value="Chromosome 5"/>
</dbReference>
<dbReference type="GO" id="GO:0005737">
    <property type="term" value="C:cytoplasm"/>
    <property type="evidence" value="ECO:0000318"/>
    <property type="project" value="GO_Central"/>
</dbReference>
<dbReference type="GO" id="GO:0005874">
    <property type="term" value="C:microtubule"/>
    <property type="evidence" value="ECO:0000318"/>
    <property type="project" value="GO_Central"/>
</dbReference>
<dbReference type="GO" id="GO:0005525">
    <property type="term" value="F:GTP binding"/>
    <property type="evidence" value="ECO:0000318"/>
    <property type="project" value="GO_Central"/>
</dbReference>
<dbReference type="GO" id="GO:0003924">
    <property type="term" value="F:GTPase activity"/>
    <property type="evidence" value="ECO:0007669"/>
    <property type="project" value="InterPro"/>
</dbReference>
<dbReference type="GO" id="GO:0046872">
    <property type="term" value="F:metal ion binding"/>
    <property type="evidence" value="ECO:0007669"/>
    <property type="project" value="UniProtKB-KW"/>
</dbReference>
<dbReference type="GO" id="GO:0005200">
    <property type="term" value="F:structural constituent of cytoskeleton"/>
    <property type="evidence" value="ECO:0000318"/>
    <property type="project" value="GO_Central"/>
</dbReference>
<dbReference type="GO" id="GO:0000226">
    <property type="term" value="P:microtubule cytoskeleton organization"/>
    <property type="evidence" value="ECO:0000318"/>
    <property type="project" value="GO_Central"/>
</dbReference>
<dbReference type="GO" id="GO:0000278">
    <property type="term" value="P:mitotic cell cycle"/>
    <property type="evidence" value="ECO:0000318"/>
    <property type="project" value="GO_Central"/>
</dbReference>
<dbReference type="CDD" id="cd02187">
    <property type="entry name" value="beta_tubulin"/>
    <property type="match status" value="1"/>
</dbReference>
<dbReference type="FunFam" id="1.10.287.600:FF:000002">
    <property type="entry name" value="Tubulin beta chain"/>
    <property type="match status" value="1"/>
</dbReference>
<dbReference type="FunFam" id="3.30.1330.20:FF:000002">
    <property type="entry name" value="Tubulin beta chain"/>
    <property type="match status" value="1"/>
</dbReference>
<dbReference type="FunFam" id="3.40.50.1440:FF:000005">
    <property type="entry name" value="Tubulin beta chain"/>
    <property type="match status" value="1"/>
</dbReference>
<dbReference type="Gene3D" id="1.10.287.600">
    <property type="entry name" value="Helix hairpin bin"/>
    <property type="match status" value="1"/>
</dbReference>
<dbReference type="Gene3D" id="3.30.1330.20">
    <property type="entry name" value="Tubulin/FtsZ, C-terminal domain"/>
    <property type="match status" value="1"/>
</dbReference>
<dbReference type="Gene3D" id="3.40.50.1440">
    <property type="entry name" value="Tubulin/FtsZ, GTPase domain"/>
    <property type="match status" value="1"/>
</dbReference>
<dbReference type="InterPro" id="IPR013838">
    <property type="entry name" value="Beta-tubulin_BS"/>
</dbReference>
<dbReference type="InterPro" id="IPR002453">
    <property type="entry name" value="Beta_tubulin"/>
</dbReference>
<dbReference type="InterPro" id="IPR008280">
    <property type="entry name" value="Tub_FtsZ_C"/>
</dbReference>
<dbReference type="InterPro" id="IPR000217">
    <property type="entry name" value="Tubulin"/>
</dbReference>
<dbReference type="InterPro" id="IPR037103">
    <property type="entry name" value="Tubulin/FtsZ-like_C"/>
</dbReference>
<dbReference type="InterPro" id="IPR018316">
    <property type="entry name" value="Tubulin/FtsZ_2-layer-sand-dom"/>
</dbReference>
<dbReference type="InterPro" id="IPR036525">
    <property type="entry name" value="Tubulin/FtsZ_GTPase_sf"/>
</dbReference>
<dbReference type="InterPro" id="IPR023123">
    <property type="entry name" value="Tubulin_C"/>
</dbReference>
<dbReference type="InterPro" id="IPR017975">
    <property type="entry name" value="Tubulin_CS"/>
</dbReference>
<dbReference type="InterPro" id="IPR003008">
    <property type="entry name" value="Tubulin_FtsZ_GTPase"/>
</dbReference>
<dbReference type="PANTHER" id="PTHR11588">
    <property type="entry name" value="TUBULIN"/>
    <property type="match status" value="1"/>
</dbReference>
<dbReference type="Pfam" id="PF00091">
    <property type="entry name" value="Tubulin"/>
    <property type="match status" value="1"/>
</dbReference>
<dbReference type="Pfam" id="PF03953">
    <property type="entry name" value="Tubulin_C"/>
    <property type="match status" value="1"/>
</dbReference>
<dbReference type="PRINTS" id="PR01163">
    <property type="entry name" value="BETATUBULIN"/>
</dbReference>
<dbReference type="PRINTS" id="PR01161">
    <property type="entry name" value="TUBULIN"/>
</dbReference>
<dbReference type="SMART" id="SM00864">
    <property type="entry name" value="Tubulin"/>
    <property type="match status" value="1"/>
</dbReference>
<dbReference type="SMART" id="SM00865">
    <property type="entry name" value="Tubulin_C"/>
    <property type="match status" value="1"/>
</dbReference>
<dbReference type="SUPFAM" id="SSF55307">
    <property type="entry name" value="Tubulin C-terminal domain-like"/>
    <property type="match status" value="1"/>
</dbReference>
<dbReference type="SUPFAM" id="SSF52490">
    <property type="entry name" value="Tubulin nucleotide-binding domain-like"/>
    <property type="match status" value="1"/>
</dbReference>
<dbReference type="PROSITE" id="PS00227">
    <property type="entry name" value="TUBULIN"/>
    <property type="match status" value="1"/>
</dbReference>
<dbReference type="PROSITE" id="PS00228">
    <property type="entry name" value="TUBULIN_B_AUTOREG"/>
    <property type="match status" value="1"/>
</dbReference>
<gene>
    <name type="primary">TUBB6</name>
    <name type="synonym">TUB6</name>
    <name type="ordered locus">Os05g0413200</name>
    <name type="ordered locus">LOC_Os05g34170</name>
    <name type="ORF">P0017D10.10</name>
</gene>
<organism>
    <name type="scientific">Oryza sativa subsp. japonica</name>
    <name type="common">Rice</name>
    <dbReference type="NCBI Taxonomy" id="39947"/>
    <lineage>
        <taxon>Eukaryota</taxon>
        <taxon>Viridiplantae</taxon>
        <taxon>Streptophyta</taxon>
        <taxon>Embryophyta</taxon>
        <taxon>Tracheophyta</taxon>
        <taxon>Spermatophyta</taxon>
        <taxon>Magnoliopsida</taxon>
        <taxon>Liliopsida</taxon>
        <taxon>Poales</taxon>
        <taxon>Poaceae</taxon>
        <taxon>BOP clade</taxon>
        <taxon>Oryzoideae</taxon>
        <taxon>Oryzeae</taxon>
        <taxon>Oryzinae</taxon>
        <taxon>Oryza</taxon>
        <taxon>Oryza sativa</taxon>
    </lineage>
</organism>